<protein>
    <recommendedName>
        <fullName evidence="13">Peroxiredoxin TSA2</fullName>
        <shortName>Prx</shortName>
        <ecNumber evidence="8">1.11.1.24</ecNumber>
    </recommendedName>
    <alternativeName>
        <fullName evidence="10">Cytoplasmic thiol peroxidase 2</fullName>
        <shortName evidence="10">cTPx 2</shortName>
    </alternativeName>
    <alternativeName>
        <fullName>Thiol-specific antioxidant protein 2</fullName>
    </alternativeName>
    <alternativeName>
        <fullName evidence="12">Thioredoxin peroxidase type Ib</fullName>
        <shortName>TPx type Ib</shortName>
    </alternativeName>
    <alternativeName>
        <fullName evidence="13">Thioredoxin-dependent peroxiredoxin TSA2</fullName>
    </alternativeName>
</protein>
<reference key="1">
    <citation type="journal article" date="1997" name="Nature">
        <title>The nucleotide sequence of Saccharomyces cerevisiae chromosome IV.</title>
        <authorList>
            <person name="Jacq C."/>
            <person name="Alt-Moerbe J."/>
            <person name="Andre B."/>
            <person name="Arnold W."/>
            <person name="Bahr A."/>
            <person name="Ballesta J.P.G."/>
            <person name="Bargues M."/>
            <person name="Baron L."/>
            <person name="Becker A."/>
            <person name="Biteau N."/>
            <person name="Bloecker H."/>
            <person name="Blugeon C."/>
            <person name="Boskovic J."/>
            <person name="Brandt P."/>
            <person name="Brueckner M."/>
            <person name="Buitrago M.J."/>
            <person name="Coster F."/>
            <person name="Delaveau T."/>
            <person name="del Rey F."/>
            <person name="Dujon B."/>
            <person name="Eide L.G."/>
            <person name="Garcia-Cantalejo J.M."/>
            <person name="Goffeau A."/>
            <person name="Gomez-Peris A."/>
            <person name="Granotier C."/>
            <person name="Hanemann V."/>
            <person name="Hankeln T."/>
            <person name="Hoheisel J.D."/>
            <person name="Jaeger W."/>
            <person name="Jimenez A."/>
            <person name="Jonniaux J.-L."/>
            <person name="Kraemer C."/>
            <person name="Kuester H."/>
            <person name="Laamanen P."/>
            <person name="Legros Y."/>
            <person name="Louis E.J."/>
            <person name="Moeller-Rieker S."/>
            <person name="Monnet A."/>
            <person name="Moro M."/>
            <person name="Mueller-Auer S."/>
            <person name="Nussbaumer B."/>
            <person name="Paricio N."/>
            <person name="Paulin L."/>
            <person name="Perea J."/>
            <person name="Perez-Alonso M."/>
            <person name="Perez-Ortin J.E."/>
            <person name="Pohl T.M."/>
            <person name="Prydz H."/>
            <person name="Purnelle B."/>
            <person name="Rasmussen S.W."/>
            <person name="Remacha M.A."/>
            <person name="Revuelta J.L."/>
            <person name="Rieger M."/>
            <person name="Salom D."/>
            <person name="Saluz H.P."/>
            <person name="Saiz J.E."/>
            <person name="Saren A.-M."/>
            <person name="Schaefer M."/>
            <person name="Scharfe M."/>
            <person name="Schmidt E.R."/>
            <person name="Schneider C."/>
            <person name="Scholler P."/>
            <person name="Schwarz S."/>
            <person name="Soler-Mira A."/>
            <person name="Urrestarazu L.A."/>
            <person name="Verhasselt P."/>
            <person name="Vissers S."/>
            <person name="Voet M."/>
            <person name="Volckaert G."/>
            <person name="Wagner G."/>
            <person name="Wambutt R."/>
            <person name="Wedler E."/>
            <person name="Wedler H."/>
            <person name="Woelfl S."/>
            <person name="Harris D.E."/>
            <person name="Bowman S."/>
            <person name="Brown D."/>
            <person name="Churcher C.M."/>
            <person name="Connor R."/>
            <person name="Dedman K."/>
            <person name="Gentles S."/>
            <person name="Hamlin N."/>
            <person name="Hunt S."/>
            <person name="Jones L."/>
            <person name="McDonald S."/>
            <person name="Murphy L.D."/>
            <person name="Niblett D."/>
            <person name="Odell C."/>
            <person name="Oliver K."/>
            <person name="Rajandream M.A."/>
            <person name="Richards C."/>
            <person name="Shore L."/>
            <person name="Walsh S.V."/>
            <person name="Barrell B.G."/>
            <person name="Dietrich F.S."/>
            <person name="Mulligan J.T."/>
            <person name="Allen E."/>
            <person name="Araujo R."/>
            <person name="Aviles E."/>
            <person name="Berno A."/>
            <person name="Carpenter J."/>
            <person name="Chen E."/>
            <person name="Cherry J.M."/>
            <person name="Chung E."/>
            <person name="Duncan M."/>
            <person name="Hunicke-Smith S."/>
            <person name="Hyman R.W."/>
            <person name="Komp C."/>
            <person name="Lashkari D."/>
            <person name="Lew H."/>
            <person name="Lin D."/>
            <person name="Mosedale D."/>
            <person name="Nakahara K."/>
            <person name="Namath A."/>
            <person name="Oefner P."/>
            <person name="Oh C."/>
            <person name="Petel F.X."/>
            <person name="Roberts D."/>
            <person name="Schramm S."/>
            <person name="Schroeder M."/>
            <person name="Shogren T."/>
            <person name="Shroff N."/>
            <person name="Winant A."/>
            <person name="Yelton M.A."/>
            <person name="Botstein D."/>
            <person name="Davis R.W."/>
            <person name="Johnston M."/>
            <person name="Andrews S."/>
            <person name="Brinkman R."/>
            <person name="Cooper J."/>
            <person name="Ding H."/>
            <person name="Du Z."/>
            <person name="Favello A."/>
            <person name="Fulton L."/>
            <person name="Gattung S."/>
            <person name="Greco T."/>
            <person name="Hallsworth K."/>
            <person name="Hawkins J."/>
            <person name="Hillier L.W."/>
            <person name="Jier M."/>
            <person name="Johnson D."/>
            <person name="Johnston L."/>
            <person name="Kirsten J."/>
            <person name="Kucaba T."/>
            <person name="Langston Y."/>
            <person name="Latreille P."/>
            <person name="Le T."/>
            <person name="Mardis E."/>
            <person name="Menezes S."/>
            <person name="Miller N."/>
            <person name="Nhan M."/>
            <person name="Pauley A."/>
            <person name="Peluso D."/>
            <person name="Rifkin L."/>
            <person name="Riles L."/>
            <person name="Taich A."/>
            <person name="Trevaskis E."/>
            <person name="Vignati D."/>
            <person name="Wilcox L."/>
            <person name="Wohldman P."/>
            <person name="Vaudin M."/>
            <person name="Wilson R."/>
            <person name="Waterston R."/>
            <person name="Albermann K."/>
            <person name="Hani J."/>
            <person name="Heumann K."/>
            <person name="Kleine K."/>
            <person name="Mewes H.-W."/>
            <person name="Zollner A."/>
            <person name="Zaccaria P."/>
        </authorList>
    </citation>
    <scope>NUCLEOTIDE SEQUENCE [LARGE SCALE GENOMIC DNA]</scope>
    <source>
        <strain>ATCC 204508 / S288c</strain>
    </source>
</reference>
<reference key="2">
    <citation type="journal article" date="2014" name="G3 (Bethesda)">
        <title>The reference genome sequence of Saccharomyces cerevisiae: Then and now.</title>
        <authorList>
            <person name="Engel S.R."/>
            <person name="Dietrich F.S."/>
            <person name="Fisk D.G."/>
            <person name="Binkley G."/>
            <person name="Balakrishnan R."/>
            <person name="Costanzo M.C."/>
            <person name="Dwight S.S."/>
            <person name="Hitz B.C."/>
            <person name="Karra K."/>
            <person name="Nash R.S."/>
            <person name="Weng S."/>
            <person name="Wong E.D."/>
            <person name="Lloyd P."/>
            <person name="Skrzypek M.S."/>
            <person name="Miyasato S.R."/>
            <person name="Simison M."/>
            <person name="Cherry J.M."/>
        </authorList>
    </citation>
    <scope>GENOME REANNOTATION</scope>
    <source>
        <strain>ATCC 204508 / S288c</strain>
    </source>
</reference>
<reference key="3">
    <citation type="journal article" date="1999" name="Biochemistry">
        <title>Purification and characterization of a second type thioredoxin peroxidase (type II TPx) from Saccharomyces cerevisiae.</title>
        <authorList>
            <person name="Jeong J.S."/>
            <person name="Kwon S.J."/>
            <person name="Kang S.W."/>
            <person name="Rhee S.G."/>
            <person name="Kim K."/>
        </authorList>
    </citation>
    <scope>FUNCTION</scope>
</reference>
<reference key="4">
    <citation type="journal article" date="2000" name="J. Biol. Chem.">
        <title>Distinct physiological functions of thiol peroxidase isoenzymes in Saccharomyces cerevisiae.</title>
        <authorList>
            <person name="Park S.G."/>
            <person name="Cha M.-K."/>
            <person name="Jeong W."/>
            <person name="Kim I.-H."/>
        </authorList>
    </citation>
    <scope>FUNCTION</scope>
    <scope>SUBCELLULAR LOCATION</scope>
    <scope>MUTAGENESIS OF CYS-48</scope>
</reference>
<reference key="5">
    <citation type="journal article" date="2002" name="J. Biol. Chem.">
        <title>Cooperation of yeast peroxiredoxins Tsa1p and Tsa2p in the cellular defense against oxidative and nitrosative stress.</title>
        <authorList>
            <person name="Wong C.M."/>
            <person name="Zhou Y."/>
            <person name="Ng R.W."/>
            <person name="Kung Hf H.F."/>
            <person name="Jin D.Y."/>
        </authorList>
    </citation>
    <scope>FUNCTION</scope>
</reference>
<reference key="6">
    <citation type="journal article" date="2003" name="Nature">
        <title>Global analysis of protein expression in yeast.</title>
        <authorList>
            <person name="Ghaemmaghami S."/>
            <person name="Huh W.-K."/>
            <person name="Bower K."/>
            <person name="Howson R.W."/>
            <person name="Belle A."/>
            <person name="Dephoure N."/>
            <person name="O'Shea E.K."/>
            <person name="Weissman J.S."/>
        </authorList>
    </citation>
    <scope>LEVEL OF PROTEIN EXPRESSION [LARGE SCALE ANALYSIS]</scope>
</reference>
<reference key="7">
    <citation type="journal article" date="2004" name="Cell">
        <title>Two enzymes in one; two yeast peroxiredoxins display oxidative stress-dependent switching from a peroxidase to a molecular chaperone function.</title>
        <authorList>
            <person name="Jang H.H."/>
            <person name="Lee K.O."/>
            <person name="Chi Y.H."/>
            <person name="Jung B.G."/>
            <person name="Park S.K."/>
            <person name="Park J.H."/>
            <person name="Lee J.R."/>
            <person name="Lee S.S."/>
            <person name="Moon J.C."/>
            <person name="Yun J.W."/>
            <person name="Choi Y.O."/>
            <person name="Kim W.Y."/>
            <person name="Kang J.S."/>
            <person name="Cheong G.W."/>
            <person name="Yun D.J."/>
            <person name="Rhee S.G."/>
            <person name="Cho M.J."/>
            <person name="Lee S.Y."/>
        </authorList>
    </citation>
    <scope>FUNCTION</scope>
</reference>
<reference key="8">
    <citation type="journal article" date="2004" name="J. Biol. Chem.">
        <title>Cytosolic thioredoxin peroxidase I and II are important defenses of yeast against organic hydroperoxide insult: catalases and peroxiredoxins cooperate in the decomposition of H2O2 by yeast.</title>
        <authorList>
            <person name="Munhoz D.C."/>
            <person name="Netto L.E."/>
        </authorList>
    </citation>
    <scope>FUNCTION</scope>
    <scope>CATALYTIC ACTIVITY</scope>
    <scope>BIOPHYSICOCHEMICAL PROPERTIES</scope>
    <scope>INDUCTION</scope>
</reference>
<reference key="9">
    <citation type="journal article" date="2016" name="Acta Crystallogr. D">
        <title>Structure of TSA2 reveals novel features of the active-site loop of peroxiredoxins.</title>
        <authorList>
            <person name="Nielsen M.H."/>
            <person name="Kidmose R.T."/>
            <person name="Jenner L.B."/>
        </authorList>
    </citation>
    <scope>X-RAY CRYSTALLOGRAPHY (2.20 ANGSTROMS) OF MUTANT SER-48</scope>
    <scope>DISULFIDE BONDS</scope>
</reference>
<proteinExistence type="evidence at protein level"/>
<accession>Q04120</accession>
<accession>D6VT78</accession>
<comment type="function">
    <text evidence="4 5 7 8">Thiol-specific peroxidase that catalyzes the reduction of hydrogen peroxide and organic hydroperoxides to water and alcohols, respectively. Plays a role in cell protection against oxidative stress by detoxifying peroxides and as sensor of hydrogen peroxide-mediated signaling events (PubMed:10681558, PubMed:11741925, PubMed:15210711). Can act alternatively as peroxidase and molecular chaperone. Oxidative stress and heat shock exposure cause a reversible shift of the protein structure from low MW species to high MW complexes, triggering a peroxidase-to-chaperone functional switch. The chaperone function of the protein enhances resistance to heat shock (PubMed:15163410).</text>
</comment>
<comment type="catalytic activity">
    <reaction evidence="8">
        <text>a hydroperoxide + [thioredoxin]-dithiol = an alcohol + [thioredoxin]-disulfide + H2O</text>
        <dbReference type="Rhea" id="RHEA:62620"/>
        <dbReference type="Rhea" id="RHEA-COMP:10698"/>
        <dbReference type="Rhea" id="RHEA-COMP:10700"/>
        <dbReference type="ChEBI" id="CHEBI:15377"/>
        <dbReference type="ChEBI" id="CHEBI:29950"/>
        <dbReference type="ChEBI" id="CHEBI:30879"/>
        <dbReference type="ChEBI" id="CHEBI:35924"/>
        <dbReference type="ChEBI" id="CHEBI:50058"/>
        <dbReference type="EC" id="1.11.1.24"/>
    </reaction>
</comment>
<comment type="biophysicochemical properties">
    <kinetics>
        <KM evidence="8">13.8 uM for H(2)O(2)</KM>
        <KM evidence="8">4.5 uM for cumene hydroperoxide</KM>
        <KM evidence="8">5.1 uM for tert-butyl hydroperoxide</KM>
        <Vmax evidence="8">0.39 uM/sec/mg enzyme for H(2)O(2)</Vmax>
        <Vmax evidence="8">0.28 uM/sec/mg enzyme for cumene hydroperoxide</Vmax>
        <Vmax evidence="8">0.29 uM/sec/mg enzyme for tert-butyl hydroperoxide</Vmax>
    </kinetics>
</comment>
<comment type="subunit">
    <text evidence="1">Homodimer; disulfide-linked, upon oxidation.</text>
</comment>
<comment type="interaction">
    <interactant intactId="EBI-19631">
        <id>Q04120</id>
    </interactant>
    <interactant intactId="EBI-19623">
        <id>P34760</id>
        <label>TSA1</label>
    </interactant>
    <organismsDiffer>false</organismsDiffer>
    <experiments>4</experiments>
</comment>
<comment type="subcellular location">
    <subcellularLocation>
        <location evidence="4">Cytoplasm</location>
    </subcellularLocation>
</comment>
<comment type="induction">
    <text evidence="8">By peroxides.</text>
</comment>
<comment type="miscellaneous">
    <text evidence="2">The active site is a conserved redox-active cysteine residue, the peroxidatic cysteine (C(P)), which makes the nucleophilic attack on the peroxide substrate. The peroxide oxidizes the C(P)-SH to cysteine sulfenic acid (C(P)-SOH), which then reacts with another cysteine residue, the resolving cysteine (C(R)), to form a disulfide bridge. The disulfide is subsequently reduced by an appropriate electron donor to complete the catalytic cycle. In this typical 2-Cys peroxiredoxin, C(R) is provided by the other dimeric subunit to form an intersubunit disulfide. The disulfide is subsequently reduced by thioredoxin.</text>
</comment>
<comment type="miscellaneous">
    <text evidence="6">Present with 4820 molecules/cell in log phase SD medium.</text>
</comment>
<comment type="similarity">
    <text evidence="13">Belongs to the peroxiredoxin family. AhpC/Prx1 subfamily.</text>
</comment>
<evidence type="ECO:0000250" key="1"/>
<evidence type="ECO:0000250" key="2">
    <source>
        <dbReference type="UniProtKB" id="P34760"/>
    </source>
</evidence>
<evidence type="ECO:0000255" key="3">
    <source>
        <dbReference type="PROSITE-ProRule" id="PRU00691"/>
    </source>
</evidence>
<evidence type="ECO:0000269" key="4">
    <source>
    </source>
</evidence>
<evidence type="ECO:0000269" key="5">
    <source>
    </source>
</evidence>
<evidence type="ECO:0000269" key="6">
    <source>
    </source>
</evidence>
<evidence type="ECO:0000269" key="7">
    <source>
    </source>
</evidence>
<evidence type="ECO:0000269" key="8">
    <source>
    </source>
</evidence>
<evidence type="ECO:0000269" key="9">
    <source>
    </source>
</evidence>
<evidence type="ECO:0000303" key="10">
    <source>
    </source>
</evidence>
<evidence type="ECO:0000303" key="11">
    <source>
    </source>
</evidence>
<evidence type="ECO:0000303" key="12">
    <source>
    </source>
</evidence>
<evidence type="ECO:0000305" key="13"/>
<evidence type="ECO:0000305" key="14">
    <source>
    </source>
</evidence>
<evidence type="ECO:0000312" key="15">
    <source>
        <dbReference type="SGD" id="S000002861"/>
    </source>
</evidence>
<evidence type="ECO:0007744" key="16">
    <source>
        <dbReference type="PDB" id="5EPT"/>
    </source>
</evidence>
<evidence type="ECO:0007829" key="17">
    <source>
        <dbReference type="PDB" id="5DVB"/>
    </source>
</evidence>
<gene>
    <name evidence="11" type="primary">TSA2</name>
    <name evidence="15" type="ordered locus">YDR453C</name>
    <name type="ORF">D9461.38</name>
</gene>
<name>TSA2_YEAST</name>
<organism>
    <name type="scientific">Saccharomyces cerevisiae (strain ATCC 204508 / S288c)</name>
    <name type="common">Baker's yeast</name>
    <dbReference type="NCBI Taxonomy" id="559292"/>
    <lineage>
        <taxon>Eukaryota</taxon>
        <taxon>Fungi</taxon>
        <taxon>Dikarya</taxon>
        <taxon>Ascomycota</taxon>
        <taxon>Saccharomycotina</taxon>
        <taxon>Saccharomycetes</taxon>
        <taxon>Saccharomycetales</taxon>
        <taxon>Saccharomycetaceae</taxon>
        <taxon>Saccharomyces</taxon>
    </lineage>
</organism>
<keyword id="KW-0002">3D-structure</keyword>
<keyword id="KW-0049">Antioxidant</keyword>
<keyword id="KW-0963">Cytoplasm</keyword>
<keyword id="KW-1015">Disulfide bond</keyword>
<keyword id="KW-1017">Isopeptide bond</keyword>
<keyword id="KW-0560">Oxidoreductase</keyword>
<keyword id="KW-0575">Peroxidase</keyword>
<keyword id="KW-0597">Phosphoprotein</keyword>
<keyword id="KW-0676">Redox-active center</keyword>
<keyword id="KW-1185">Reference proteome</keyword>
<keyword id="KW-0832">Ubl conjugation</keyword>
<sequence>MVAEVQKQAPPFKKTAVVDGIFEEISLEKYKGKYVVLAFVPLAFSFVCPTEIVAFSDAAKKFEDQGAQVLFASTDSEYSLLAWTNLPRKDGGLGPVKVPLLADKNHSLSRDYGVLIEKEGIALRGLFIIDPKGIIRHITINDLSVGRNVNEALRLVEGFQWTDKNGTVLPCNWTPGAATIKPDVKDSKEYFKNANN</sequence>
<feature type="chain" id="PRO_0000135096" description="Peroxiredoxin TSA2">
    <location>
        <begin position="1"/>
        <end position="196"/>
    </location>
</feature>
<feature type="domain" description="Thioredoxin" evidence="3">
    <location>
        <begin position="3"/>
        <end position="161"/>
    </location>
</feature>
<feature type="active site" description="Cysteine sulfenic acid (-SOH) intermediate" evidence="14">
    <location>
        <position position="48"/>
    </location>
</feature>
<feature type="modified residue" description="Phosphothreonine" evidence="2">
    <location>
        <position position="174"/>
    </location>
</feature>
<feature type="disulfide bond" description="Interchain (with C-171); in linked form" evidence="9 16">
    <location>
        <position position="48"/>
    </location>
</feature>
<feature type="disulfide bond" description="Interchain (with C-48); in linked form" evidence="9 16">
    <location>
        <position position="171"/>
    </location>
</feature>
<feature type="cross-link" description="Glycyl lysine isopeptide (Lys-Gly) (interchain with G-Cter in ubiquitin)" evidence="2">
    <location>
        <position position="14"/>
    </location>
</feature>
<feature type="cross-link" description="Glycyl lysine isopeptide (Lys-Gly) (interchain with G-Cter in ubiquitin)" evidence="2">
    <location>
        <position position="89"/>
    </location>
</feature>
<feature type="cross-link" description="Glycyl lysine isopeptide (Lys-Gly) (interchain with G-Cter in ubiquitin)" evidence="2">
    <location>
        <position position="132"/>
    </location>
</feature>
<feature type="mutagenesis site" description="No activity." evidence="4">
    <original>C</original>
    <variation>S</variation>
    <location>
        <position position="48"/>
    </location>
</feature>
<feature type="strand" evidence="17">
    <location>
        <begin position="13"/>
        <end position="18"/>
    </location>
</feature>
<feature type="strand" evidence="17">
    <location>
        <begin position="21"/>
        <end position="27"/>
    </location>
</feature>
<feature type="helix" evidence="17">
    <location>
        <begin position="28"/>
        <end position="30"/>
    </location>
</feature>
<feature type="strand" evidence="17">
    <location>
        <begin position="33"/>
        <end position="39"/>
    </location>
</feature>
<feature type="strand" evidence="17">
    <location>
        <begin position="45"/>
        <end position="47"/>
    </location>
</feature>
<feature type="helix" evidence="17">
    <location>
        <begin position="48"/>
        <end position="57"/>
    </location>
</feature>
<feature type="helix" evidence="17">
    <location>
        <begin position="59"/>
        <end position="64"/>
    </location>
</feature>
<feature type="strand" evidence="17">
    <location>
        <begin position="67"/>
        <end position="75"/>
    </location>
</feature>
<feature type="helix" evidence="17">
    <location>
        <begin position="77"/>
        <end position="85"/>
    </location>
</feature>
<feature type="turn" evidence="17">
    <location>
        <begin position="88"/>
        <end position="91"/>
    </location>
</feature>
<feature type="strand" evidence="17">
    <location>
        <begin position="100"/>
        <end position="102"/>
    </location>
</feature>
<feature type="helix" evidence="17">
    <location>
        <begin position="107"/>
        <end position="111"/>
    </location>
</feature>
<feature type="turn" evidence="17">
    <location>
        <begin position="117"/>
        <end position="119"/>
    </location>
</feature>
<feature type="strand" evidence="17">
    <location>
        <begin position="124"/>
        <end position="129"/>
    </location>
</feature>
<feature type="strand" evidence="17">
    <location>
        <begin position="133"/>
        <end position="141"/>
    </location>
</feature>
<feature type="helix" evidence="17">
    <location>
        <begin position="149"/>
        <end position="165"/>
    </location>
</feature>
<feature type="turn" evidence="17">
    <location>
        <begin position="184"/>
        <end position="186"/>
    </location>
</feature>
<feature type="helix" evidence="17">
    <location>
        <begin position="187"/>
        <end position="193"/>
    </location>
</feature>
<dbReference type="EC" id="1.11.1.24" evidence="8"/>
<dbReference type="EMBL" id="U33007">
    <property type="protein sequence ID" value="AAB64886.1"/>
    <property type="molecule type" value="Genomic_DNA"/>
</dbReference>
<dbReference type="EMBL" id="BK006938">
    <property type="protein sequence ID" value="DAA12288.1"/>
    <property type="molecule type" value="Genomic_DNA"/>
</dbReference>
<dbReference type="PIR" id="S69732">
    <property type="entry name" value="S69732"/>
</dbReference>
<dbReference type="RefSeq" id="NP_010741.1">
    <property type="nucleotide sequence ID" value="NM_001180761.1"/>
</dbReference>
<dbReference type="PDB" id="5DVB">
    <property type="method" value="X-ray"/>
    <property type="resolution" value="2.20 A"/>
    <property type="chains" value="A/B/C/D/E/F/G/H/I/J=1-196"/>
</dbReference>
<dbReference type="PDB" id="5EPT">
    <property type="method" value="X-ray"/>
    <property type="resolution" value="5.00 A"/>
    <property type="chains" value="A/B/C/D/E/F/G/H/I/J=1-196"/>
</dbReference>
<dbReference type="PDB" id="6UTL">
    <property type="method" value="X-ray"/>
    <property type="resolution" value="2.60 A"/>
    <property type="chains" value="A/B/C/D/E/F/G/H/I/J=1-196"/>
</dbReference>
<dbReference type="PDBsum" id="5DVB"/>
<dbReference type="PDBsum" id="5EPT"/>
<dbReference type="PDBsum" id="6UTL"/>
<dbReference type="SMR" id="Q04120"/>
<dbReference type="BioGRID" id="32508">
    <property type="interactions" value="70"/>
</dbReference>
<dbReference type="DIP" id="DIP-4317N"/>
<dbReference type="FunCoup" id="Q04120">
    <property type="interactions" value="1163"/>
</dbReference>
<dbReference type="IntAct" id="Q04120">
    <property type="interactions" value="14"/>
</dbReference>
<dbReference type="MINT" id="Q04120"/>
<dbReference type="STRING" id="4932.YDR453C"/>
<dbReference type="MoonProt" id="Q04120"/>
<dbReference type="PeroxiBase" id="4467">
    <property type="entry name" value="Sce2CysPrx02"/>
</dbReference>
<dbReference type="PaxDb" id="4932-YDR453C"/>
<dbReference type="PeptideAtlas" id="Q04120"/>
<dbReference type="TopDownProteomics" id="Q04120"/>
<dbReference type="EnsemblFungi" id="YDR453C_mRNA">
    <property type="protein sequence ID" value="YDR453C"/>
    <property type="gene ID" value="YDR453C"/>
</dbReference>
<dbReference type="GeneID" id="852064"/>
<dbReference type="KEGG" id="sce:YDR453C"/>
<dbReference type="AGR" id="SGD:S000002861"/>
<dbReference type="SGD" id="S000002861">
    <property type="gene designation" value="TSA2"/>
</dbReference>
<dbReference type="VEuPathDB" id="FungiDB:YDR453C"/>
<dbReference type="eggNOG" id="KOG0852">
    <property type="taxonomic scope" value="Eukaryota"/>
</dbReference>
<dbReference type="GeneTree" id="ENSGT00940000153430"/>
<dbReference type="HOGENOM" id="CLU_042529_21_1_1"/>
<dbReference type="InParanoid" id="Q04120"/>
<dbReference type="OMA" id="NNFGVMR"/>
<dbReference type="OrthoDB" id="185659at2759"/>
<dbReference type="BioCyc" id="YEAST:YDR453C-MONOMER"/>
<dbReference type="BRENDA" id="1.11.1.24">
    <property type="organism ID" value="984"/>
</dbReference>
<dbReference type="Reactome" id="R-SCE-3299685">
    <property type="pathway name" value="Detoxification of Reactive Oxygen Species"/>
</dbReference>
<dbReference type="Reactome" id="R-SCE-5628897">
    <property type="pathway name" value="TP53 Regulates Metabolic Genes"/>
</dbReference>
<dbReference type="Reactome" id="R-SCE-6798695">
    <property type="pathway name" value="Neutrophil degranulation"/>
</dbReference>
<dbReference type="BioGRID-ORCS" id="852064">
    <property type="hits" value="2 hits in 10 CRISPR screens"/>
</dbReference>
<dbReference type="PRO" id="PR:Q04120"/>
<dbReference type="Proteomes" id="UP000002311">
    <property type="component" value="Chromosome IV"/>
</dbReference>
<dbReference type="RNAct" id="Q04120">
    <property type="molecule type" value="protein"/>
</dbReference>
<dbReference type="GO" id="GO:0005737">
    <property type="term" value="C:cytoplasm"/>
    <property type="evidence" value="ECO:0000314"/>
    <property type="project" value="SGD"/>
</dbReference>
<dbReference type="GO" id="GO:0005829">
    <property type="term" value="C:cytosol"/>
    <property type="evidence" value="ECO:0000318"/>
    <property type="project" value="GO_Central"/>
</dbReference>
<dbReference type="GO" id="GO:0051920">
    <property type="term" value="F:peroxiredoxin activity"/>
    <property type="evidence" value="ECO:0000314"/>
    <property type="project" value="SGD"/>
</dbReference>
<dbReference type="GO" id="GO:0008379">
    <property type="term" value="F:thioredoxin peroxidase activity"/>
    <property type="evidence" value="ECO:0000314"/>
    <property type="project" value="SGD"/>
</dbReference>
<dbReference type="GO" id="GO:0045454">
    <property type="term" value="P:cell redox homeostasis"/>
    <property type="evidence" value="ECO:0000314"/>
    <property type="project" value="SGD"/>
</dbReference>
<dbReference type="GO" id="GO:0034605">
    <property type="term" value="P:cellular response to heat"/>
    <property type="evidence" value="ECO:0000314"/>
    <property type="project" value="SGD"/>
</dbReference>
<dbReference type="GO" id="GO:0034599">
    <property type="term" value="P:cellular response to oxidative stress"/>
    <property type="evidence" value="ECO:0000315"/>
    <property type="project" value="SGD"/>
</dbReference>
<dbReference type="GO" id="GO:0042744">
    <property type="term" value="P:hydrogen peroxide catabolic process"/>
    <property type="evidence" value="ECO:0000318"/>
    <property type="project" value="GO_Central"/>
</dbReference>
<dbReference type="GO" id="GO:0006457">
    <property type="term" value="P:protein folding"/>
    <property type="evidence" value="ECO:0000314"/>
    <property type="project" value="SGD"/>
</dbReference>
<dbReference type="GO" id="GO:0050821">
    <property type="term" value="P:protein stabilization"/>
    <property type="evidence" value="ECO:0000314"/>
    <property type="project" value="CAFA"/>
</dbReference>
<dbReference type="GO" id="GO:0006979">
    <property type="term" value="P:response to oxidative stress"/>
    <property type="evidence" value="ECO:0000318"/>
    <property type="project" value="GO_Central"/>
</dbReference>
<dbReference type="CDD" id="cd03015">
    <property type="entry name" value="PRX_Typ2cys"/>
    <property type="match status" value="1"/>
</dbReference>
<dbReference type="FunFam" id="3.40.30.10:FF:000003">
    <property type="entry name" value="Peroxiredoxin 1"/>
    <property type="match status" value="1"/>
</dbReference>
<dbReference type="Gene3D" id="3.40.30.10">
    <property type="entry name" value="Glutaredoxin"/>
    <property type="match status" value="1"/>
</dbReference>
<dbReference type="InterPro" id="IPR000866">
    <property type="entry name" value="AhpC/TSA"/>
</dbReference>
<dbReference type="InterPro" id="IPR050217">
    <property type="entry name" value="Peroxiredoxin"/>
</dbReference>
<dbReference type="InterPro" id="IPR024706">
    <property type="entry name" value="Peroxiredoxin_AhpC-typ"/>
</dbReference>
<dbReference type="InterPro" id="IPR019479">
    <property type="entry name" value="Peroxiredoxin_C"/>
</dbReference>
<dbReference type="InterPro" id="IPR036249">
    <property type="entry name" value="Thioredoxin-like_sf"/>
</dbReference>
<dbReference type="InterPro" id="IPR013766">
    <property type="entry name" value="Thioredoxin_domain"/>
</dbReference>
<dbReference type="PANTHER" id="PTHR10681:SF171">
    <property type="entry name" value="PEROXIREDOXIN 4"/>
    <property type="match status" value="1"/>
</dbReference>
<dbReference type="PANTHER" id="PTHR10681">
    <property type="entry name" value="THIOREDOXIN PEROXIDASE"/>
    <property type="match status" value="1"/>
</dbReference>
<dbReference type="Pfam" id="PF10417">
    <property type="entry name" value="1-cysPrx_C"/>
    <property type="match status" value="1"/>
</dbReference>
<dbReference type="Pfam" id="PF00578">
    <property type="entry name" value="AhpC-TSA"/>
    <property type="match status" value="1"/>
</dbReference>
<dbReference type="PIRSF" id="PIRSF000239">
    <property type="entry name" value="AHPC"/>
    <property type="match status" value="1"/>
</dbReference>
<dbReference type="SUPFAM" id="SSF52833">
    <property type="entry name" value="Thioredoxin-like"/>
    <property type="match status" value="1"/>
</dbReference>
<dbReference type="PROSITE" id="PS51352">
    <property type="entry name" value="THIOREDOXIN_2"/>
    <property type="match status" value="1"/>
</dbReference>